<keyword id="KW-0025">Alternative splicing</keyword>
<keyword id="KW-1003">Cell membrane</keyword>
<keyword id="KW-1015">Disulfide bond</keyword>
<keyword id="KW-0297">G-protein coupled receptor</keyword>
<keyword id="KW-0325">Glycoprotein</keyword>
<keyword id="KW-0449">Lipoprotein</keyword>
<keyword id="KW-0472">Membrane</keyword>
<keyword id="KW-0564">Palmitate</keyword>
<keyword id="KW-0597">Phosphoprotein</keyword>
<keyword id="KW-0675">Receptor</keyword>
<keyword id="KW-1185">Reference proteome</keyword>
<keyword id="KW-0732">Signal</keyword>
<keyword id="KW-0807">Transducer</keyword>
<keyword id="KW-0812">Transmembrane</keyword>
<keyword id="KW-1133">Transmembrane helix</keyword>
<organism>
    <name type="scientific">Drosophila melanogaster</name>
    <name type="common">Fruit fly</name>
    <dbReference type="NCBI Taxonomy" id="7227"/>
    <lineage>
        <taxon>Eukaryota</taxon>
        <taxon>Metazoa</taxon>
        <taxon>Ecdysozoa</taxon>
        <taxon>Arthropoda</taxon>
        <taxon>Hexapoda</taxon>
        <taxon>Insecta</taxon>
        <taxon>Pterygota</taxon>
        <taxon>Neoptera</taxon>
        <taxon>Endopterygota</taxon>
        <taxon>Diptera</taxon>
        <taxon>Brachycera</taxon>
        <taxon>Muscomorpha</taxon>
        <taxon>Ephydroidea</taxon>
        <taxon>Drosophilidae</taxon>
        <taxon>Drosophila</taxon>
        <taxon>Sophophora</taxon>
    </lineage>
</organism>
<gene>
    <name type="primary">Dop1R1</name>
    <name type="synonym">DopR</name>
    <name type="synonym">DopR1</name>
    <name type="synonym">DopR35EF</name>
    <name type="ORF">CG9652</name>
</gene>
<protein>
    <recommendedName>
        <fullName>Dopamine receptor 1</fullName>
        <shortName>D-DOP1</shortName>
        <shortName>DmDop1</shortName>
        <shortName>dDA1</shortName>
    </recommendedName>
    <alternativeName>
        <fullName>Dopamine 1-like receptor 1</fullName>
    </alternativeName>
</protein>
<sequence>MYTPHPFGFLIILVPMTNAMRAIAAIAAGVGSVAATVATSTTSSISSSTTIINTSSATTIGGNHTSGSTGFSTNSTLLDADHLPLQLTTAKVDLDIEIDIQLLTNGYDGTTLTSFYNESSWTNASEMDTIVGEEPEPLSLVSIVVVGIFLSVLIFLSVAGNILVCLAIYTERSLRRIGNLFLASLAIADLFVASLVMTFAGVNDLLGYWIFGAQFCDTWVAFDVMCSTASILNLCAISMDRYIHIKDPLRYGRWVTRRVAVITIAAIWLLAAFVSFVPISLGIHRPDQPLIFEDNGKKYPTCALDLTPTYAVVSSCISFYFPCVVMIGIYCRLYCYAQKHVKSIKAVTRPGEVAEKQRYKSIRRPKNQPKKFKVRNLHTHSSPYHVSDHKAAVTVGVIMGVFLICWVPFFCVNITAAFCKTCIGGQTFKILTWLGYSNSAFNPIIYSIFNKEFRDAFKRILTMRNPWCCAQDVGNIHPRNSDRFITDYAAKNVVVMNSGRSSAELEQVSAI</sequence>
<feature type="signal peptide" evidence="1">
    <location>
        <begin position="1"/>
        <end position="19"/>
    </location>
</feature>
<feature type="chain" id="PRO_0000012718" description="Dopamine receptor 1">
    <location>
        <begin position="20"/>
        <end position="511"/>
    </location>
</feature>
<feature type="topological domain" description="Extracellular" evidence="1">
    <location>
        <begin position="20"/>
        <end position="142"/>
    </location>
</feature>
<feature type="transmembrane region" description="Helical; Name=1" evidence="1">
    <location>
        <begin position="143"/>
        <end position="169"/>
    </location>
</feature>
<feature type="topological domain" description="Cytoplasmic" evidence="1">
    <location>
        <begin position="170"/>
        <end position="179"/>
    </location>
</feature>
<feature type="transmembrane region" description="Helical; Name=2" evidence="1">
    <location>
        <begin position="180"/>
        <end position="206"/>
    </location>
</feature>
<feature type="topological domain" description="Extracellular" evidence="1">
    <location>
        <begin position="207"/>
        <end position="216"/>
    </location>
</feature>
<feature type="transmembrane region" description="Helical; Name=3" evidence="1">
    <location>
        <begin position="217"/>
        <end position="239"/>
    </location>
</feature>
<feature type="topological domain" description="Cytoplasmic" evidence="1">
    <location>
        <begin position="240"/>
        <end position="258"/>
    </location>
</feature>
<feature type="transmembrane region" description="Helical; Name=4" evidence="1">
    <location>
        <begin position="259"/>
        <end position="279"/>
    </location>
</feature>
<feature type="topological domain" description="Extracellular" evidence="1">
    <location>
        <begin position="280"/>
        <end position="310"/>
    </location>
</feature>
<feature type="transmembrane region" description="Helical; Name=5" evidence="1">
    <location>
        <begin position="311"/>
        <end position="331"/>
    </location>
</feature>
<feature type="topological domain" description="Cytoplasmic" evidence="1">
    <location>
        <begin position="332"/>
        <end position="391"/>
    </location>
</feature>
<feature type="transmembrane region" description="Helical; Name=6" evidence="1">
    <location>
        <begin position="392"/>
        <end position="412"/>
    </location>
</feature>
<feature type="topological domain" description="Extracellular" evidence="1">
    <location>
        <begin position="413"/>
        <end position="427"/>
    </location>
</feature>
<feature type="transmembrane region" description="Helical; Name=7" evidence="1">
    <location>
        <begin position="428"/>
        <end position="450"/>
    </location>
</feature>
<feature type="topological domain" description="Cytoplasmic" evidence="1">
    <location>
        <begin position="451"/>
        <end position="511"/>
    </location>
</feature>
<feature type="lipid moiety-binding region" description="S-palmitoyl cysteine" evidence="1">
    <location>
        <position position="468"/>
    </location>
</feature>
<feature type="lipid moiety-binding region" description="S-palmitoyl cysteine" evidence="1">
    <location>
        <position position="469"/>
    </location>
</feature>
<feature type="glycosylation site" description="N-linked (GlcNAc...) asparagine" evidence="1">
    <location>
        <position position="53"/>
    </location>
</feature>
<feature type="glycosylation site" description="N-linked (GlcNAc...) asparagine" evidence="1">
    <location>
        <position position="63"/>
    </location>
</feature>
<feature type="glycosylation site" description="N-linked (GlcNAc...) asparagine" evidence="1">
    <location>
        <position position="74"/>
    </location>
</feature>
<feature type="glycosylation site" description="N-linked (GlcNAc...) asparagine" evidence="1">
    <location>
        <position position="117"/>
    </location>
</feature>
<feature type="glycosylation site" description="N-linked (GlcNAc...) asparagine" evidence="1">
    <location>
        <position position="123"/>
    </location>
</feature>
<feature type="disulfide bond" evidence="2">
    <location>
        <begin position="216"/>
        <end position="302"/>
    </location>
</feature>
<feature type="splice variant" id="VSP_053645" description="In isoform C." evidence="11">
    <location>
        <begin position="1"/>
        <end position="15"/>
    </location>
</feature>
<feature type="splice variant" id="VSP_037471" description="In isoform B and isoform C." evidence="10">
    <location>
        <begin position="133"/>
        <end position="147"/>
    </location>
</feature>
<feature type="sequence variant" description="In strain: Canton-S." evidence="9">
    <original>I</original>
    <variation>L</variation>
    <location>
        <position position="60"/>
    </location>
</feature>
<feature type="sequence variant" description="In strain: Canton-S." evidence="9">
    <original>T</original>
    <variation>I</variation>
    <location>
        <position position="69"/>
    </location>
</feature>
<feature type="sequence conflict" description="In Ref. 4; ABP87886." evidence="11" ref="4">
    <original>G</original>
    <variation>V</variation>
    <location>
        <position position="109"/>
    </location>
</feature>
<feature type="sequence conflict" description="In Ref. 1; CAA54451." evidence="11" ref="1">
    <original>ER</original>
    <variation>DG</variation>
    <location>
        <begin position="171"/>
        <end position="172"/>
    </location>
</feature>
<feature type="sequence conflict" description="In Ref. 1; CAA54451." evidence="11" ref="1">
    <original>R</original>
    <variation>P</variation>
    <location>
        <position position="175"/>
    </location>
</feature>
<feature type="sequence conflict" description="In Ref. 4; ABP87886." evidence="11" ref="4">
    <original>Y</original>
    <variation>D</variation>
    <location>
        <position position="208"/>
    </location>
</feature>
<feature type="sequence conflict" description="In Ref. 4; ABP87886." evidence="11" ref="4">
    <original>A</original>
    <variation>T</variation>
    <location>
        <position position="354"/>
    </location>
</feature>
<proteinExistence type="evidence at transcript level"/>
<reference key="1">
    <citation type="journal article" date="1994" name="Recept. Channels">
        <title>Primary structure and functional characterization of a Drosophila dopamine receptor with high homology to human D1/5 receptors.</title>
        <authorList>
            <person name="Gotzes F."/>
            <person name="Balfanz S."/>
            <person name="Baumann A."/>
        </authorList>
    </citation>
    <scope>NUCLEOTIDE SEQUENCE [MRNA] (ISOFORM A)</scope>
    <scope>FUNCTION</scope>
    <scope>TISSUE SPECIFICITY</scope>
    <source>
        <strain>Berlin</strain>
        <tissue>Head</tissue>
    </source>
</reference>
<reference key="2">
    <citation type="journal article" date="2000" name="Science">
        <title>The genome sequence of Drosophila melanogaster.</title>
        <authorList>
            <person name="Adams M.D."/>
            <person name="Celniker S.E."/>
            <person name="Holt R.A."/>
            <person name="Evans C.A."/>
            <person name="Gocayne J.D."/>
            <person name="Amanatides P.G."/>
            <person name="Scherer S.E."/>
            <person name="Li P.W."/>
            <person name="Hoskins R.A."/>
            <person name="Galle R.F."/>
            <person name="George R.A."/>
            <person name="Lewis S.E."/>
            <person name="Richards S."/>
            <person name="Ashburner M."/>
            <person name="Henderson S.N."/>
            <person name="Sutton G.G."/>
            <person name="Wortman J.R."/>
            <person name="Yandell M.D."/>
            <person name="Zhang Q."/>
            <person name="Chen L.X."/>
            <person name="Brandon R.C."/>
            <person name="Rogers Y.-H.C."/>
            <person name="Blazej R.G."/>
            <person name="Champe M."/>
            <person name="Pfeiffer B.D."/>
            <person name="Wan K.H."/>
            <person name="Doyle C."/>
            <person name="Baxter E.G."/>
            <person name="Helt G."/>
            <person name="Nelson C.R."/>
            <person name="Miklos G.L.G."/>
            <person name="Abril J.F."/>
            <person name="Agbayani A."/>
            <person name="An H.-J."/>
            <person name="Andrews-Pfannkoch C."/>
            <person name="Baldwin D."/>
            <person name="Ballew R.M."/>
            <person name="Basu A."/>
            <person name="Baxendale J."/>
            <person name="Bayraktaroglu L."/>
            <person name="Beasley E.M."/>
            <person name="Beeson K.Y."/>
            <person name="Benos P.V."/>
            <person name="Berman B.P."/>
            <person name="Bhandari D."/>
            <person name="Bolshakov S."/>
            <person name="Borkova D."/>
            <person name="Botchan M.R."/>
            <person name="Bouck J."/>
            <person name="Brokstein P."/>
            <person name="Brottier P."/>
            <person name="Burtis K.C."/>
            <person name="Busam D.A."/>
            <person name="Butler H."/>
            <person name="Cadieu E."/>
            <person name="Center A."/>
            <person name="Chandra I."/>
            <person name="Cherry J.M."/>
            <person name="Cawley S."/>
            <person name="Dahlke C."/>
            <person name="Davenport L.B."/>
            <person name="Davies P."/>
            <person name="de Pablos B."/>
            <person name="Delcher A."/>
            <person name="Deng Z."/>
            <person name="Mays A.D."/>
            <person name="Dew I."/>
            <person name="Dietz S.M."/>
            <person name="Dodson K."/>
            <person name="Doup L.E."/>
            <person name="Downes M."/>
            <person name="Dugan-Rocha S."/>
            <person name="Dunkov B.C."/>
            <person name="Dunn P."/>
            <person name="Durbin K.J."/>
            <person name="Evangelista C.C."/>
            <person name="Ferraz C."/>
            <person name="Ferriera S."/>
            <person name="Fleischmann W."/>
            <person name="Fosler C."/>
            <person name="Gabrielian A.E."/>
            <person name="Garg N.S."/>
            <person name="Gelbart W.M."/>
            <person name="Glasser K."/>
            <person name="Glodek A."/>
            <person name="Gong F."/>
            <person name="Gorrell J.H."/>
            <person name="Gu Z."/>
            <person name="Guan P."/>
            <person name="Harris M."/>
            <person name="Harris N.L."/>
            <person name="Harvey D.A."/>
            <person name="Heiman T.J."/>
            <person name="Hernandez J.R."/>
            <person name="Houck J."/>
            <person name="Hostin D."/>
            <person name="Houston K.A."/>
            <person name="Howland T.J."/>
            <person name="Wei M.-H."/>
            <person name="Ibegwam C."/>
            <person name="Jalali M."/>
            <person name="Kalush F."/>
            <person name="Karpen G.H."/>
            <person name="Ke Z."/>
            <person name="Kennison J.A."/>
            <person name="Ketchum K.A."/>
            <person name="Kimmel B.E."/>
            <person name="Kodira C.D."/>
            <person name="Kraft C.L."/>
            <person name="Kravitz S."/>
            <person name="Kulp D."/>
            <person name="Lai Z."/>
            <person name="Lasko P."/>
            <person name="Lei Y."/>
            <person name="Levitsky A.A."/>
            <person name="Li J.H."/>
            <person name="Li Z."/>
            <person name="Liang Y."/>
            <person name="Lin X."/>
            <person name="Liu X."/>
            <person name="Mattei B."/>
            <person name="McIntosh T.C."/>
            <person name="McLeod M.P."/>
            <person name="McPherson D."/>
            <person name="Merkulov G."/>
            <person name="Milshina N.V."/>
            <person name="Mobarry C."/>
            <person name="Morris J."/>
            <person name="Moshrefi A."/>
            <person name="Mount S.M."/>
            <person name="Moy M."/>
            <person name="Murphy B."/>
            <person name="Murphy L."/>
            <person name="Muzny D.M."/>
            <person name="Nelson D.L."/>
            <person name="Nelson D.R."/>
            <person name="Nelson K.A."/>
            <person name="Nixon K."/>
            <person name="Nusskern D.R."/>
            <person name="Pacleb J.M."/>
            <person name="Palazzolo M."/>
            <person name="Pittman G.S."/>
            <person name="Pan S."/>
            <person name="Pollard J."/>
            <person name="Puri V."/>
            <person name="Reese M.G."/>
            <person name="Reinert K."/>
            <person name="Remington K."/>
            <person name="Saunders R.D.C."/>
            <person name="Scheeler F."/>
            <person name="Shen H."/>
            <person name="Shue B.C."/>
            <person name="Siden-Kiamos I."/>
            <person name="Simpson M."/>
            <person name="Skupski M.P."/>
            <person name="Smith T.J."/>
            <person name="Spier E."/>
            <person name="Spradling A.C."/>
            <person name="Stapleton M."/>
            <person name="Strong R."/>
            <person name="Sun E."/>
            <person name="Svirskas R."/>
            <person name="Tector C."/>
            <person name="Turner R."/>
            <person name="Venter E."/>
            <person name="Wang A.H."/>
            <person name="Wang X."/>
            <person name="Wang Z.-Y."/>
            <person name="Wassarman D.A."/>
            <person name="Weinstock G.M."/>
            <person name="Weissenbach J."/>
            <person name="Williams S.M."/>
            <person name="Woodage T."/>
            <person name="Worley K.C."/>
            <person name="Wu D."/>
            <person name="Yang S."/>
            <person name="Yao Q.A."/>
            <person name="Ye J."/>
            <person name="Yeh R.-F."/>
            <person name="Zaveri J.S."/>
            <person name="Zhan M."/>
            <person name="Zhang G."/>
            <person name="Zhao Q."/>
            <person name="Zheng L."/>
            <person name="Zheng X.H."/>
            <person name="Zhong F.N."/>
            <person name="Zhong W."/>
            <person name="Zhou X."/>
            <person name="Zhu S.C."/>
            <person name="Zhu X."/>
            <person name="Smith H.O."/>
            <person name="Gibbs R.A."/>
            <person name="Myers E.W."/>
            <person name="Rubin G.M."/>
            <person name="Venter J.C."/>
        </authorList>
    </citation>
    <scope>NUCLEOTIDE SEQUENCE [LARGE SCALE GENOMIC DNA]</scope>
    <source>
        <strain>Berkeley</strain>
    </source>
</reference>
<reference key="3">
    <citation type="journal article" date="2002" name="Genome Biol.">
        <title>Annotation of the Drosophila melanogaster euchromatic genome: a systematic review.</title>
        <authorList>
            <person name="Misra S."/>
            <person name="Crosby M.A."/>
            <person name="Mungall C.J."/>
            <person name="Matthews B.B."/>
            <person name="Campbell K.S."/>
            <person name="Hradecky P."/>
            <person name="Huang Y."/>
            <person name="Kaminker J.S."/>
            <person name="Millburn G.H."/>
            <person name="Prochnik S.E."/>
            <person name="Smith C.D."/>
            <person name="Tupy J.L."/>
            <person name="Whitfield E.J."/>
            <person name="Bayraktaroglu L."/>
            <person name="Berman B.P."/>
            <person name="Bettencourt B.R."/>
            <person name="Celniker S.E."/>
            <person name="de Grey A.D.N.J."/>
            <person name="Drysdale R.A."/>
            <person name="Harris N.L."/>
            <person name="Richter J."/>
            <person name="Russo S."/>
            <person name="Schroeder A.J."/>
            <person name="Shu S.Q."/>
            <person name="Stapleton M."/>
            <person name="Yamada C."/>
            <person name="Ashburner M."/>
            <person name="Gelbart W.M."/>
            <person name="Rubin G.M."/>
            <person name="Lewis S.E."/>
        </authorList>
    </citation>
    <scope>GENOME REANNOTATION</scope>
    <source>
        <strain>Berkeley</strain>
    </source>
</reference>
<reference key="4">
    <citation type="submission" date="2013-07" db="EMBL/GenBank/DDBJ databases">
        <authorList>
            <person name="Stapleton M."/>
            <person name="Booth B."/>
            <person name="Carlson J.W."/>
            <person name="Frise E."/>
            <person name="Kapadia B."/>
            <person name="Park S."/>
            <person name="Wan K.H."/>
            <person name="Yu C."/>
            <person name="Celniker S.E."/>
        </authorList>
    </citation>
    <scope>NUCLEOTIDE SEQUENCE [LARGE SCALE MRNA] (ISOFORM B)</scope>
    <source>
        <strain>Berkeley</strain>
    </source>
</reference>
<reference key="5">
    <citation type="journal article" date="1996" name="Biochem. Biophys. Res. Commun.">
        <title>Functional properties of Drosophila dopamine D1-receptors are not altered by the size of the N-terminus.</title>
        <authorList>
            <person name="Gotzes F."/>
            <person name="Baumann A."/>
        </authorList>
    </citation>
    <scope>PARTIAL NUCLEOTIDE SEQUENCE [GENOMIC DNA / MRNA] OF N-TERMINUS</scope>
    <scope>FUNCTION</scope>
    <scope>VARIANTS LEU-60 AND ILE-69</scope>
    <source>
        <strain>Canton-S</strain>
        <strain>Oregon-R</strain>
    </source>
</reference>
<reference key="6">
    <citation type="journal article" date="1995" name="FEBS Lett.">
        <title>A primordial dopamine D1-like adenylyl cyclase-linked receptor from Drosophila melanogaster displaying poor affinity for benzazepines.</title>
        <authorList>
            <person name="Sugamori K.S."/>
            <person name="Demchyshyn L.L."/>
            <person name="McConkey F."/>
            <person name="Forte M.A."/>
            <person name="Niznik H.B."/>
        </authorList>
    </citation>
    <scope>NUCLEOTIDE SEQUENCE [MRNA] OF 127-511 (ISOFORM A)</scope>
    <scope>FUNCTION</scope>
    <scope>DEVELOPMENTAL STAGE</scope>
    <source>
        <strain>Canton-S</strain>
        <tissue>Head</tissue>
    </source>
</reference>
<reference key="7">
    <citation type="journal article" date="2003" name="Gene Expr. Patterns">
        <title>Expression of a D1 dopamine receptor dDA1/DmDOP1 in the central nervous system of Drosophila melanogaster.</title>
        <authorList>
            <person name="Kim Y.-C."/>
            <person name="Lee H.-G."/>
            <person name="Seong C.-S."/>
            <person name="Han K.-A."/>
        </authorList>
    </citation>
    <scope>TISSUE SPECIFICITY</scope>
</reference>
<reference key="8">
    <citation type="journal article" date="2007" name="J. Neurosci.">
        <title>D1 dopamine receptor dDA1 is required in the mushroom body neurons for aversive and appetitive learning in Drosophila.</title>
        <authorList>
            <person name="Kim Y.-C."/>
            <person name="Lee H.-G."/>
            <person name="Han K.-A."/>
        </authorList>
    </citation>
    <scope>FUNCTION</scope>
    <scope>TISSUE SPECIFICITY</scope>
</reference>
<reference key="9">
    <citation type="journal article" date="2008" name="Curr. Biol.">
        <title>D1 receptor activation in the mushroom bodies rescues sleep-loss-induced learning impairments in Drosophila.</title>
        <authorList>
            <person name="Seugnet L."/>
            <person name="Suzuki Y."/>
            <person name="Vine L."/>
            <person name="Gottschalk L."/>
            <person name="Shaw P.J."/>
        </authorList>
    </citation>
    <scope>FUNCTION</scope>
</reference>
<reference key="10">
    <citation type="journal article" date="2022" name="EMBO J.">
        <title>Myc suppresses male-male courtship in Drosophila.</title>
        <authorList>
            <person name="Pan Y."/>
            <person name="Li W."/>
            <person name="Deng Z."/>
            <person name="Sun Y."/>
            <person name="Ma X."/>
            <person name="Liang R."/>
            <person name="Guo X."/>
            <person name="Sun Y."/>
            <person name="Li W."/>
            <person name="Jiao R."/>
            <person name="Xue L."/>
        </authorList>
    </citation>
    <scope>DISRUPTION PHENOTYPE</scope>
</reference>
<comment type="function">
    <text evidence="4 5 7 8 9">Receptor for dopamine. The activity of this receptor is mediated by G proteins which activate adenylyl cyclase. Might be involved in the processing of visual information and/or visual learning. Important for Pavlovian conditioning: required in the mushroom body as a receptor conveying unconditional stimuli information, has a role in memory formation for aversive and appetitive learning. Sleep-deprivation-induced impairments in learning can be partially explained through alterations in dopamine signaling, Dop1R1 expression levels are reduced; sleep may have a role in restoring dopamine homeostasis.</text>
</comment>
<comment type="subcellular location">
    <subcellularLocation>
        <location>Cell membrane</location>
        <topology>Multi-pass membrane protein</topology>
    </subcellularLocation>
</comment>
<comment type="alternative products">
    <event type="alternative splicing"/>
    <isoform>
        <id>P41596-1</id>
        <name>A</name>
        <sequence type="displayed"/>
    </isoform>
    <isoform>
        <id>P41596-2</id>
        <name>B</name>
        <sequence type="described" ref="VSP_037471"/>
    </isoform>
    <isoform>
        <id>P41596-3</id>
        <name>C</name>
        <sequence type="described" ref="VSP_053645 VSP_037471"/>
    </isoform>
</comment>
<comment type="tissue specificity">
    <text evidence="3 4 8">Expressed in the larval and adult CNS in structures that mediate higher-order brain functions such as learning, memory and motor control: in the mushroom body neuropil and four unpaired neurons in each thoracic segment. The adult CNS has intense expression in the central complex, moderate expression in several neurosecretory cells, and weak expression in two unpaired neurons in the mesothoracic neuromere. Also seen in the somata of the optic lobes.</text>
</comment>
<comment type="developmental stage">
    <text evidence="7">Expressed both maternally and zygotically.</text>
</comment>
<comment type="disruption phenotype">
    <text evidence="6">Simultaneous knockdown of Dop1R1 and myc restores the induced male-male courtship observed in the single myc knockdown.</text>
</comment>
<comment type="miscellaneous">
    <text>Potency of neurotransmitter agonists in stimulating cAMP production and the lack of stimulation by other transmitters and metabolites suggests this is a D1-like receptor. Low homology to vertebrate D1 receptors suggests this may be a progenitor of the D1 receptor subfamily.</text>
</comment>
<comment type="similarity">
    <text evidence="2">Belongs to the G-protein coupled receptor 1 family.</text>
</comment>
<evidence type="ECO:0000255" key="1"/>
<evidence type="ECO:0000255" key="2">
    <source>
        <dbReference type="PROSITE-ProRule" id="PRU00521"/>
    </source>
</evidence>
<evidence type="ECO:0000269" key="3">
    <source>
    </source>
</evidence>
<evidence type="ECO:0000269" key="4">
    <source>
    </source>
</evidence>
<evidence type="ECO:0000269" key="5">
    <source>
    </source>
</evidence>
<evidence type="ECO:0000269" key="6">
    <source>
    </source>
</evidence>
<evidence type="ECO:0000269" key="7">
    <source>
    </source>
</evidence>
<evidence type="ECO:0000269" key="8">
    <source>
    </source>
</evidence>
<evidence type="ECO:0000269" key="9">
    <source>
    </source>
</evidence>
<evidence type="ECO:0000303" key="10">
    <source ref="4"/>
</evidence>
<evidence type="ECO:0000305" key="11"/>
<dbReference type="EMBL" id="X77234">
    <property type="protein sequence ID" value="CAA54451.1"/>
    <property type="molecule type" value="mRNA"/>
</dbReference>
<dbReference type="EMBL" id="AE014297">
    <property type="protein sequence ID" value="AAF55030.3"/>
    <property type="molecule type" value="Genomic_DNA"/>
</dbReference>
<dbReference type="EMBL" id="AE014297">
    <property type="protein sequence ID" value="ACZ94904.1"/>
    <property type="molecule type" value="Genomic_DNA"/>
</dbReference>
<dbReference type="EMBL" id="BT030444">
    <property type="protein sequence ID" value="ABP87886.1"/>
    <property type="molecule type" value="mRNA"/>
</dbReference>
<dbReference type="EMBL" id="BT150144">
    <property type="protein sequence ID" value="AGP25446.1"/>
    <property type="molecule type" value="mRNA"/>
</dbReference>
<dbReference type="EMBL" id="U22106">
    <property type="protein sequence ID" value="AAA85716.1"/>
    <property type="molecule type" value="mRNA"/>
</dbReference>
<dbReference type="PIR" id="S44275">
    <property type="entry name" value="S44275"/>
</dbReference>
<dbReference type="PIR" id="S68780">
    <property type="entry name" value="S68780"/>
</dbReference>
<dbReference type="RefSeq" id="NP_001163607.1">
    <molecule id="P41596-3"/>
    <property type="nucleotide sequence ID" value="NM_001170136.2"/>
</dbReference>
<dbReference type="RefSeq" id="NP_001247092.1">
    <molecule id="P41596-1"/>
    <property type="nucleotide sequence ID" value="NM_001260163.1"/>
</dbReference>
<dbReference type="RefSeq" id="NP_477007.2">
    <property type="nucleotide sequence ID" value="NM_057659.4"/>
</dbReference>
<dbReference type="SMR" id="P41596"/>
<dbReference type="BioGRID" id="66803">
    <property type="interactions" value="3"/>
</dbReference>
<dbReference type="FunCoup" id="P41596">
    <property type="interactions" value="178"/>
</dbReference>
<dbReference type="STRING" id="7227.FBpp0303554"/>
<dbReference type="GlyCosmos" id="P41596">
    <property type="glycosylation" value="5 sites, No reported glycans"/>
</dbReference>
<dbReference type="GlyGen" id="P41596">
    <property type="glycosylation" value="6 sites"/>
</dbReference>
<dbReference type="PaxDb" id="7227-FBpp0300511"/>
<dbReference type="DNASU" id="41726"/>
<dbReference type="EnsemblMetazoa" id="FBtr0301351">
    <molecule id="P41596-3"/>
    <property type="protein sequence ID" value="FBpp0290565"/>
    <property type="gene ID" value="FBgn0011582"/>
</dbReference>
<dbReference type="EnsemblMetazoa" id="FBtr0308191">
    <molecule id="P41596-1"/>
    <property type="protein sequence ID" value="FBpp0300511"/>
    <property type="gene ID" value="FBgn0011582"/>
</dbReference>
<dbReference type="GeneID" id="41726"/>
<dbReference type="KEGG" id="dme:Dmel_CG9652"/>
<dbReference type="AGR" id="FB:FBgn0011582"/>
<dbReference type="CTD" id="41726"/>
<dbReference type="FlyBase" id="FBgn0011582">
    <property type="gene designation" value="Dop1R1"/>
</dbReference>
<dbReference type="VEuPathDB" id="VectorBase:FBgn0011582"/>
<dbReference type="eggNOG" id="KOG3656">
    <property type="taxonomic scope" value="Eukaryota"/>
</dbReference>
<dbReference type="GeneTree" id="ENSGT00940000154484"/>
<dbReference type="InParanoid" id="P41596"/>
<dbReference type="OrthoDB" id="5957871at2759"/>
<dbReference type="PhylomeDB" id="P41596"/>
<dbReference type="Reactome" id="R-DME-390666">
    <property type="pathway name" value="Serotonin receptors"/>
</dbReference>
<dbReference type="Reactome" id="R-DME-418555">
    <property type="pathway name" value="G alpha (s) signalling events"/>
</dbReference>
<dbReference type="BioGRID-ORCS" id="41726">
    <property type="hits" value="0 hits in 3 CRISPR screens"/>
</dbReference>
<dbReference type="GenomeRNAi" id="41726"/>
<dbReference type="PRO" id="PR:P41596"/>
<dbReference type="Proteomes" id="UP000000803">
    <property type="component" value="Chromosome 3R"/>
</dbReference>
<dbReference type="Bgee" id="FBgn0011582">
    <property type="expression patterns" value="Expressed in gamma Kenyon cell (Drosophila) in insect head and 97 other cell types or tissues"/>
</dbReference>
<dbReference type="ExpressionAtlas" id="P41596">
    <property type="expression patterns" value="baseline and differential"/>
</dbReference>
<dbReference type="GO" id="GO:0030425">
    <property type="term" value="C:dendrite"/>
    <property type="evidence" value="ECO:0000318"/>
    <property type="project" value="GO_Central"/>
</dbReference>
<dbReference type="GO" id="GO:0016020">
    <property type="term" value="C:membrane"/>
    <property type="evidence" value="ECO:0000250"/>
    <property type="project" value="FlyBase"/>
</dbReference>
<dbReference type="GO" id="GO:0005886">
    <property type="term" value="C:plasma membrane"/>
    <property type="evidence" value="ECO:0000255"/>
    <property type="project" value="FlyBase"/>
</dbReference>
<dbReference type="GO" id="GO:0098793">
    <property type="term" value="C:presynapse"/>
    <property type="evidence" value="ECO:0007669"/>
    <property type="project" value="GOC"/>
</dbReference>
<dbReference type="GO" id="GO:0004952">
    <property type="term" value="F:dopamine neurotransmitter receptor activity"/>
    <property type="evidence" value="ECO:0000250"/>
    <property type="project" value="FlyBase"/>
</dbReference>
<dbReference type="GO" id="GO:0001588">
    <property type="term" value="F:dopamine neurotransmitter receptor activity, coupled via Gs"/>
    <property type="evidence" value="ECO:0000314"/>
    <property type="project" value="FlyBase"/>
</dbReference>
<dbReference type="GO" id="GO:0004930">
    <property type="term" value="F:G protein-coupled receptor activity"/>
    <property type="evidence" value="ECO:0000250"/>
    <property type="project" value="FlyBase"/>
</dbReference>
<dbReference type="GO" id="GO:0004993">
    <property type="term" value="F:G protein-coupled serotonin receptor activity"/>
    <property type="evidence" value="ECO:0000318"/>
    <property type="project" value="GO_Central"/>
</dbReference>
<dbReference type="GO" id="GO:0030594">
    <property type="term" value="F:neurotransmitter receptor activity"/>
    <property type="evidence" value="ECO:0000318"/>
    <property type="project" value="GO_Central"/>
</dbReference>
<dbReference type="GO" id="GO:0007191">
    <property type="term" value="P:adenylate cyclase-activating dopamine receptor signaling pathway"/>
    <property type="evidence" value="ECO:0000314"/>
    <property type="project" value="FlyBase"/>
</dbReference>
<dbReference type="GO" id="GO:0007188">
    <property type="term" value="P:adenylate cyclase-modulating G protein-coupled receptor signaling pathway"/>
    <property type="evidence" value="ECO:0000318"/>
    <property type="project" value="GO_Central"/>
</dbReference>
<dbReference type="GO" id="GO:0008306">
    <property type="term" value="P:associative learning"/>
    <property type="evidence" value="ECO:0000315"/>
    <property type="project" value="UniProtKB"/>
</dbReference>
<dbReference type="GO" id="GO:0071329">
    <property type="term" value="P:cellular response to sucrose stimulus"/>
    <property type="evidence" value="ECO:0000314"/>
    <property type="project" value="FlyBase"/>
</dbReference>
<dbReference type="GO" id="GO:0007268">
    <property type="term" value="P:chemical synaptic transmission"/>
    <property type="evidence" value="ECO:0000318"/>
    <property type="project" value="GO_Central"/>
</dbReference>
<dbReference type="GO" id="GO:0007212">
    <property type="term" value="P:G protein-coupled dopamine receptor signaling pathway"/>
    <property type="evidence" value="ECO:0000250"/>
    <property type="project" value="FlyBase"/>
</dbReference>
<dbReference type="GO" id="GO:0007187">
    <property type="term" value="P:G protein-coupled receptor signaling pathway, coupled to cyclic nucleotide second messenger"/>
    <property type="evidence" value="ECO:0000318"/>
    <property type="project" value="GO_Central"/>
</dbReference>
<dbReference type="GO" id="GO:0007612">
    <property type="term" value="P:learning"/>
    <property type="evidence" value="ECO:0000315"/>
    <property type="project" value="FlyBase"/>
</dbReference>
<dbReference type="GO" id="GO:0007613">
    <property type="term" value="P:memory"/>
    <property type="evidence" value="ECO:0000315"/>
    <property type="project" value="UniProtKB"/>
</dbReference>
<dbReference type="GO" id="GO:0042048">
    <property type="term" value="P:olfactory behavior"/>
    <property type="evidence" value="ECO:0000315"/>
    <property type="project" value="FlyBase"/>
</dbReference>
<dbReference type="GO" id="GO:0008355">
    <property type="term" value="P:olfactory learning"/>
    <property type="evidence" value="ECO:0000315"/>
    <property type="project" value="FlyBase"/>
</dbReference>
<dbReference type="GO" id="GO:0090328">
    <property type="term" value="P:regulation of olfactory learning"/>
    <property type="evidence" value="ECO:0000315"/>
    <property type="project" value="FlyBase"/>
</dbReference>
<dbReference type="GO" id="GO:0099509">
    <property type="term" value="P:regulation of presynaptic cytosolic calcium ion concentration"/>
    <property type="evidence" value="ECO:0000315"/>
    <property type="project" value="FlyBase"/>
</dbReference>
<dbReference type="GO" id="GO:1990834">
    <property type="term" value="P:response to odorant"/>
    <property type="evidence" value="ECO:0000315"/>
    <property type="project" value="FlyBase"/>
</dbReference>
<dbReference type="GO" id="GO:0042594">
    <property type="term" value="P:response to starvation"/>
    <property type="evidence" value="ECO:0000315"/>
    <property type="project" value="FlyBase"/>
</dbReference>
<dbReference type="GO" id="GO:0009744">
    <property type="term" value="P:response to sucrose"/>
    <property type="evidence" value="ECO:0000315"/>
    <property type="project" value="FlyBase"/>
</dbReference>
<dbReference type="GO" id="GO:0040040">
    <property type="term" value="P:thermosensory behavior"/>
    <property type="evidence" value="ECO:0000315"/>
    <property type="project" value="FlyBase"/>
</dbReference>
<dbReference type="GO" id="GO:0043052">
    <property type="term" value="P:thermotaxis"/>
    <property type="evidence" value="ECO:0000315"/>
    <property type="project" value="FlyBase"/>
</dbReference>
<dbReference type="GO" id="GO:0008542">
    <property type="term" value="P:visual learning"/>
    <property type="evidence" value="ECO:0000315"/>
    <property type="project" value="UniProtKB"/>
</dbReference>
<dbReference type="CDD" id="cd15065">
    <property type="entry name" value="7tmA_Ap5-HTB1-like"/>
    <property type="match status" value="1"/>
</dbReference>
<dbReference type="FunFam" id="1.20.1070.10:FF:000260">
    <property type="entry name" value="Dopamine receptor 1"/>
    <property type="match status" value="1"/>
</dbReference>
<dbReference type="Gene3D" id="1.20.1070.10">
    <property type="entry name" value="Rhodopsin 7-helix transmembrane proteins"/>
    <property type="match status" value="1"/>
</dbReference>
<dbReference type="InterPro" id="IPR000929">
    <property type="entry name" value="Dopamine_rcpt"/>
</dbReference>
<dbReference type="InterPro" id="IPR000276">
    <property type="entry name" value="GPCR_Rhodpsn"/>
</dbReference>
<dbReference type="InterPro" id="IPR017452">
    <property type="entry name" value="GPCR_Rhodpsn_7TM"/>
</dbReference>
<dbReference type="PANTHER" id="PTHR24248">
    <property type="entry name" value="ADRENERGIC RECEPTOR-RELATED G-PROTEIN COUPLED RECEPTOR"/>
    <property type="match status" value="1"/>
</dbReference>
<dbReference type="PANTHER" id="PTHR24248:SF187">
    <property type="entry name" value="OCTOPAMINE RECEPTOR BETA-2R"/>
    <property type="match status" value="1"/>
</dbReference>
<dbReference type="Pfam" id="PF00001">
    <property type="entry name" value="7tm_1"/>
    <property type="match status" value="1"/>
</dbReference>
<dbReference type="PRINTS" id="PR00242">
    <property type="entry name" value="DOPAMINER"/>
</dbReference>
<dbReference type="PRINTS" id="PR00237">
    <property type="entry name" value="GPCRRHODOPSN"/>
</dbReference>
<dbReference type="SMART" id="SM01381">
    <property type="entry name" value="7TM_GPCR_Srsx"/>
    <property type="match status" value="1"/>
</dbReference>
<dbReference type="SUPFAM" id="SSF81321">
    <property type="entry name" value="Family A G protein-coupled receptor-like"/>
    <property type="match status" value="1"/>
</dbReference>
<dbReference type="PROSITE" id="PS00237">
    <property type="entry name" value="G_PROTEIN_RECEP_F1_1"/>
    <property type="match status" value="1"/>
</dbReference>
<dbReference type="PROSITE" id="PS50262">
    <property type="entry name" value="G_PROTEIN_RECEP_F1_2"/>
    <property type="match status" value="1"/>
</dbReference>
<accession>P41596</accession>
<accession>A4VCK3</accession>
<accession>E1JIK5</accession>
<accession>Q24038</accession>
<accession>Q9VFM1</accession>
<accession>S4X4E2</accession>
<name>DOPR1_DROME</name>